<accession>P34854</accession>
<accession>O20870</accession>
<accession>O20871</accession>
<accession>O20873</accession>
<accession>O20874</accession>
<accession>O20875</accession>
<accession>Q31664</accession>
<accession>Q31665</accession>
<protein>
    <recommendedName>
        <fullName>NADH-ubiquinone oxidoreductase chain 5</fullName>
        <ecNumber>7.1.1.2</ecNumber>
    </recommendedName>
    <alternativeName>
        <fullName>NADH dehydrogenase subunit 5</fullName>
    </alternativeName>
</protein>
<reference key="1">
    <citation type="journal article" date="1993" name="Insect Mol. Biol.">
        <title>The mitochondrial genome of the mosquito Anopheles gambiae: DNA sequence, genome organization, and comparisons with mitochondrial sequences of other insects.</title>
        <authorList>
            <person name="Beard C.B."/>
            <person name="Hamm D.M."/>
            <person name="Collins F.H."/>
        </authorList>
    </citation>
    <scope>NUCLEOTIDE SEQUENCE [LARGE SCALE GENOMIC DNA]</scope>
    <source>
        <strain>G3</strain>
    </source>
</reference>
<reference key="2">
    <citation type="journal article" date="1994" name="Proc. Natl. Acad. Sci. U.S.A.">
        <title>Molecular phylogeny of the Anopheles gambiae complex suggests genetic introgression between principal malaria vectors.</title>
        <authorList>
            <person name="Besansky N.J."/>
            <person name="Powell J.R."/>
            <person name="Caccone A."/>
            <person name="Hamm D.M."/>
            <person name="Scott J.A."/>
            <person name="Collins F.H."/>
        </authorList>
    </citation>
    <scope>NUCLEOTIDE SEQUENCE [GENOMIC DNA] OF 1-265</scope>
    <source>
        <strain>G3</strain>
        <strain>GMMK6</strain>
        <strain>Muheza</strain>
    </source>
</reference>
<reference key="3">
    <citation type="journal article" date="1997" name="Genetics">
        <title>Patterns of mitochondrial variation within and between African malaria vectors, Anopheles gambiae and An. arabiensis, suggest extensive gene flow.</title>
        <authorList>
            <person name="Besansky N.J."/>
            <person name="Lehmann T."/>
            <person name="Fahey G.T."/>
            <person name="Fontenille D."/>
            <person name="Braack L.E.O."/>
            <person name="Hawley W.A."/>
            <person name="Collins F.H."/>
        </authorList>
    </citation>
    <scope>NUCLEOTIDE SEQUENCE [GENOMIC DNA] OF 163-384</scope>
    <scope>VARIANTS</scope>
</reference>
<name>NU5M_ANOGA</name>
<geneLocation type="mitochondrion"/>
<evidence type="ECO:0000250" key="1"/>
<evidence type="ECO:0000255" key="2"/>
<evidence type="ECO:0000305" key="3"/>
<keyword id="KW-0249">Electron transport</keyword>
<keyword id="KW-0472">Membrane</keyword>
<keyword id="KW-0496">Mitochondrion</keyword>
<keyword id="KW-0999">Mitochondrion inner membrane</keyword>
<keyword id="KW-0520">NAD</keyword>
<keyword id="KW-1185">Reference proteome</keyword>
<keyword id="KW-0679">Respiratory chain</keyword>
<keyword id="KW-1278">Translocase</keyword>
<keyword id="KW-0812">Transmembrane</keyword>
<keyword id="KW-1133">Transmembrane helix</keyword>
<keyword id="KW-0813">Transport</keyword>
<keyword id="KW-0830">Ubiquinone</keyword>
<comment type="function">
    <text evidence="1">Core subunit of the mitochondrial membrane respiratory chain NADH dehydrogenase (Complex I) that is believed to belong to the minimal assembly required for catalysis. Complex I functions in the transfer of electrons from NADH to the respiratory chain. The immediate electron acceptor for the enzyme is believed to be ubiquinone (By similarity).</text>
</comment>
<comment type="catalytic activity">
    <reaction>
        <text>a ubiquinone + NADH + 5 H(+)(in) = a ubiquinol + NAD(+) + 4 H(+)(out)</text>
        <dbReference type="Rhea" id="RHEA:29091"/>
        <dbReference type="Rhea" id="RHEA-COMP:9565"/>
        <dbReference type="Rhea" id="RHEA-COMP:9566"/>
        <dbReference type="ChEBI" id="CHEBI:15378"/>
        <dbReference type="ChEBI" id="CHEBI:16389"/>
        <dbReference type="ChEBI" id="CHEBI:17976"/>
        <dbReference type="ChEBI" id="CHEBI:57540"/>
        <dbReference type="ChEBI" id="CHEBI:57945"/>
        <dbReference type="EC" id="7.1.1.2"/>
    </reaction>
</comment>
<comment type="subcellular location">
    <subcellularLocation>
        <location evidence="1">Mitochondrion inner membrane</location>
        <topology evidence="1">Multi-pass membrane protein</topology>
    </subcellularLocation>
</comment>
<comment type="similarity">
    <text evidence="3">Belongs to the complex I subunit 5 family.</text>
</comment>
<dbReference type="EC" id="7.1.1.2"/>
<dbReference type="EMBL" id="L20934">
    <property type="protein sequence ID" value="AAD12197.1"/>
    <property type="molecule type" value="Genomic_DNA"/>
</dbReference>
<dbReference type="EMBL" id="U10126">
    <property type="protein sequence ID" value="AAB51635.1"/>
    <property type="molecule type" value="Genomic_DNA"/>
</dbReference>
<dbReference type="EMBL" id="U10127">
    <property type="protein sequence ID" value="AAB51637.1"/>
    <property type="molecule type" value="Genomic_DNA"/>
</dbReference>
<dbReference type="EMBL" id="U10128">
    <property type="protein sequence ID" value="AAB51639.1"/>
    <property type="molecule type" value="Genomic_DNA"/>
</dbReference>
<dbReference type="EMBL" id="AF020967">
    <property type="protein sequence ID" value="AAB81769.1"/>
    <property type="molecule type" value="Genomic_DNA"/>
</dbReference>
<dbReference type="EMBL" id="AF020968">
    <property type="protein sequence ID" value="AAB81770.1"/>
    <property type="molecule type" value="Genomic_DNA"/>
</dbReference>
<dbReference type="EMBL" id="AF020970">
    <property type="protein sequence ID" value="AAB81772.1"/>
    <property type="molecule type" value="Genomic_DNA"/>
</dbReference>
<dbReference type="EMBL" id="AF020971">
    <property type="protein sequence ID" value="AAB81773.1"/>
    <property type="molecule type" value="Genomic_DNA"/>
</dbReference>
<dbReference type="EMBL" id="AF020973">
    <property type="protein sequence ID" value="AAB81775.1"/>
    <property type="molecule type" value="Genomic_DNA"/>
</dbReference>
<dbReference type="EMBL" id="AF020980">
    <property type="protein sequence ID" value="AAB81782.1"/>
    <property type="molecule type" value="Genomic_DNA"/>
</dbReference>
<dbReference type="EMBL" id="AF020988">
    <property type="protein sequence ID" value="AAB81790.1"/>
    <property type="molecule type" value="Genomic_DNA"/>
</dbReference>
<dbReference type="EMBL" id="AF020989">
    <property type="protein sequence ID" value="AAB81791.1"/>
    <property type="molecule type" value="Genomic_DNA"/>
</dbReference>
<dbReference type="EMBL" id="AF020991">
    <property type="protein sequence ID" value="AAB81793.1"/>
    <property type="molecule type" value="Genomic_DNA"/>
</dbReference>
<dbReference type="EMBL" id="AF020992">
    <property type="protein sequence ID" value="AAB81794.1"/>
    <property type="molecule type" value="Genomic_DNA"/>
</dbReference>
<dbReference type="EMBL" id="AF020993">
    <property type="protein sequence ID" value="AAB81795.1"/>
    <property type="molecule type" value="Genomic_DNA"/>
</dbReference>
<dbReference type="EMBL" id="AF020998">
    <property type="protein sequence ID" value="AAB81800.1"/>
    <property type="molecule type" value="Genomic_DNA"/>
</dbReference>
<dbReference type="EMBL" id="AF020999">
    <property type="protein sequence ID" value="AAB81801.1"/>
    <property type="molecule type" value="Genomic_DNA"/>
</dbReference>
<dbReference type="EMBL" id="AF021002">
    <property type="protein sequence ID" value="AAB81804.1"/>
    <property type="molecule type" value="Genomic_DNA"/>
</dbReference>
<dbReference type="EMBL" id="AF021003">
    <property type="protein sequence ID" value="AAB81805.1"/>
    <property type="molecule type" value="Genomic_DNA"/>
</dbReference>
<dbReference type="EMBL" id="AF021011">
    <property type="protein sequence ID" value="AAB81813.1"/>
    <property type="molecule type" value="Genomic_DNA"/>
</dbReference>
<dbReference type="EMBL" id="AF021012">
    <property type="protein sequence ID" value="AAB81814.1"/>
    <property type="molecule type" value="Genomic_DNA"/>
</dbReference>
<dbReference type="EMBL" id="AF021013">
    <property type="protein sequence ID" value="AAB81815.1"/>
    <property type="molecule type" value="Genomic_DNA"/>
</dbReference>
<dbReference type="EMBL" id="AF021014">
    <property type="protein sequence ID" value="AAB81816.1"/>
    <property type="molecule type" value="Genomic_DNA"/>
</dbReference>
<dbReference type="EMBL" id="AF021015">
    <property type="protein sequence ID" value="AAB81817.1"/>
    <property type="molecule type" value="Genomic_DNA"/>
</dbReference>
<dbReference type="EMBL" id="AF021016">
    <property type="protein sequence ID" value="AAB81818.1"/>
    <property type="molecule type" value="Genomic_DNA"/>
</dbReference>
<dbReference type="EMBL" id="AF021017">
    <property type="protein sequence ID" value="AAB81819.1"/>
    <property type="molecule type" value="Genomic_DNA"/>
</dbReference>
<dbReference type="EMBL" id="AF021018">
    <property type="protein sequence ID" value="AAB81820.1"/>
    <property type="molecule type" value="Genomic_DNA"/>
</dbReference>
<dbReference type="EMBL" id="AF021019">
    <property type="protein sequence ID" value="AAB81821.1"/>
    <property type="molecule type" value="Genomic_DNA"/>
</dbReference>
<dbReference type="EMBL" id="AF021020">
    <property type="protein sequence ID" value="AAB81822.1"/>
    <property type="molecule type" value="Genomic_DNA"/>
</dbReference>
<dbReference type="EMBL" id="AF021021">
    <property type="protein sequence ID" value="AAB81823.1"/>
    <property type="molecule type" value="Genomic_DNA"/>
</dbReference>
<dbReference type="EMBL" id="AF021022">
    <property type="protein sequence ID" value="AAB81824.1"/>
    <property type="molecule type" value="Genomic_DNA"/>
</dbReference>
<dbReference type="EMBL" id="AF021023">
    <property type="protein sequence ID" value="AAB81825.1"/>
    <property type="molecule type" value="Genomic_DNA"/>
</dbReference>
<dbReference type="PIR" id="T09808">
    <property type="entry name" value="T09808"/>
</dbReference>
<dbReference type="RefSeq" id="NP_008076.1">
    <property type="nucleotide sequence ID" value="NC_002084.1"/>
</dbReference>
<dbReference type="SMR" id="P34854"/>
<dbReference type="FunCoup" id="P34854">
    <property type="interactions" value="140"/>
</dbReference>
<dbReference type="STRING" id="7165.P34854"/>
<dbReference type="PaxDb" id="7165-AGAP028380-PA"/>
<dbReference type="VEuPathDB" id="VectorBase:AGAMI1_014507"/>
<dbReference type="VEuPathDB" id="VectorBase:AGAP028380"/>
<dbReference type="eggNOG" id="KOG4668">
    <property type="taxonomic scope" value="Eukaryota"/>
</dbReference>
<dbReference type="HOGENOM" id="CLU_007100_6_0_1"/>
<dbReference type="InParanoid" id="P34854"/>
<dbReference type="OMA" id="MDWGWAR"/>
<dbReference type="Proteomes" id="UP000007062">
    <property type="component" value="Mitochondrion"/>
</dbReference>
<dbReference type="GO" id="GO:0005743">
    <property type="term" value="C:mitochondrial inner membrane"/>
    <property type="evidence" value="ECO:0007669"/>
    <property type="project" value="UniProtKB-SubCell"/>
</dbReference>
<dbReference type="GO" id="GO:0045271">
    <property type="term" value="C:respiratory chain complex I"/>
    <property type="evidence" value="ECO:0000318"/>
    <property type="project" value="GO_Central"/>
</dbReference>
<dbReference type="GO" id="GO:0008137">
    <property type="term" value="F:NADH dehydrogenase (ubiquinone) activity"/>
    <property type="evidence" value="ECO:0007669"/>
    <property type="project" value="UniProtKB-EC"/>
</dbReference>
<dbReference type="GO" id="GO:0042773">
    <property type="term" value="P:ATP synthesis coupled electron transport"/>
    <property type="evidence" value="ECO:0007669"/>
    <property type="project" value="InterPro"/>
</dbReference>
<dbReference type="GO" id="GO:0015990">
    <property type="term" value="P:electron transport coupled proton transport"/>
    <property type="evidence" value="ECO:0000318"/>
    <property type="project" value="GO_Central"/>
</dbReference>
<dbReference type="InterPro" id="IPR010934">
    <property type="entry name" value="NADH_DH_su5_C"/>
</dbReference>
<dbReference type="InterPro" id="IPR001750">
    <property type="entry name" value="ND/Mrp_TM"/>
</dbReference>
<dbReference type="InterPro" id="IPR003945">
    <property type="entry name" value="NU5C-like"/>
</dbReference>
<dbReference type="InterPro" id="IPR001516">
    <property type="entry name" value="Proton_antipo_N"/>
</dbReference>
<dbReference type="PANTHER" id="PTHR42829">
    <property type="entry name" value="NADH-UBIQUINONE OXIDOREDUCTASE CHAIN 5"/>
    <property type="match status" value="1"/>
</dbReference>
<dbReference type="PANTHER" id="PTHR42829:SF2">
    <property type="entry name" value="NADH-UBIQUINONE OXIDOREDUCTASE CHAIN 5"/>
    <property type="match status" value="1"/>
</dbReference>
<dbReference type="Pfam" id="PF06455">
    <property type="entry name" value="NADH5_C"/>
    <property type="match status" value="1"/>
</dbReference>
<dbReference type="Pfam" id="PF00361">
    <property type="entry name" value="Proton_antipo_M"/>
    <property type="match status" value="1"/>
</dbReference>
<dbReference type="Pfam" id="PF00662">
    <property type="entry name" value="Proton_antipo_N"/>
    <property type="match status" value="1"/>
</dbReference>
<dbReference type="PRINTS" id="PR01434">
    <property type="entry name" value="NADHDHGNASE5"/>
</dbReference>
<dbReference type="PRINTS" id="PR01435">
    <property type="entry name" value="NPOXDRDTASE5"/>
</dbReference>
<feature type="chain" id="PRO_0000118054" description="NADH-ubiquinone oxidoreductase chain 5">
    <location>
        <begin position="1"/>
        <end position="580"/>
    </location>
</feature>
<feature type="transmembrane region" description="Helical" evidence="2">
    <location>
        <begin position="12"/>
        <end position="32"/>
    </location>
</feature>
<feature type="transmembrane region" description="Helical" evidence="2">
    <location>
        <begin position="50"/>
        <end position="70"/>
    </location>
</feature>
<feature type="transmembrane region" description="Helical" evidence="2">
    <location>
        <begin position="92"/>
        <end position="112"/>
    </location>
</feature>
<feature type="transmembrane region" description="Helical" evidence="2">
    <location>
        <begin position="113"/>
        <end position="133"/>
    </location>
</feature>
<feature type="transmembrane region" description="Helical" evidence="2">
    <location>
        <begin position="153"/>
        <end position="173"/>
    </location>
</feature>
<feature type="transmembrane region" description="Helical" evidence="2">
    <location>
        <begin position="183"/>
        <end position="203"/>
    </location>
</feature>
<feature type="transmembrane region" description="Helical" evidence="2">
    <location>
        <begin position="215"/>
        <end position="235"/>
    </location>
</feature>
<feature type="transmembrane region" description="Helical" evidence="2">
    <location>
        <begin position="244"/>
        <end position="264"/>
    </location>
</feature>
<feature type="transmembrane region" description="Helical" evidence="2">
    <location>
        <begin position="274"/>
        <end position="293"/>
    </location>
</feature>
<feature type="transmembrane region" description="Helical" evidence="2">
    <location>
        <begin position="298"/>
        <end position="320"/>
    </location>
</feature>
<feature type="transmembrane region" description="Helical" evidence="2">
    <location>
        <begin position="343"/>
        <end position="363"/>
    </location>
</feature>
<feature type="transmembrane region" description="Helical" evidence="2">
    <location>
        <begin position="367"/>
        <end position="387"/>
    </location>
</feature>
<feature type="transmembrane region" description="Helical" evidence="2">
    <location>
        <begin position="427"/>
        <end position="447"/>
    </location>
</feature>
<feature type="transmembrane region" description="Helical" evidence="2">
    <location>
        <begin position="463"/>
        <end position="483"/>
    </location>
</feature>
<feature type="transmembrane region" description="Helical" evidence="2">
    <location>
        <begin position="496"/>
        <end position="516"/>
    </location>
</feature>
<feature type="transmembrane region" description="Helical" evidence="2">
    <location>
        <begin position="560"/>
        <end position="580"/>
    </location>
</feature>
<feature type="sequence variant" description="In strain: GMMK6.">
    <original>M</original>
    <variation>T</variation>
    <location>
        <position position="32"/>
    </location>
</feature>
<feature type="sequence variant" description="In strain: Muheza.">
    <original>L</original>
    <variation>S</variation>
    <location>
        <position position="116"/>
    </location>
</feature>
<feature type="sequence variant" description="In haplotype 25.">
    <original>I</original>
    <variation>V</variation>
    <location>
        <position position="181"/>
    </location>
</feature>
<feature type="sequence variant" description="In haplotype 38.">
    <original>V</original>
    <variation>F</variation>
    <location>
        <position position="190"/>
    </location>
</feature>
<feature type="sequence variant" description="In haplotype 39.">
    <original>D</original>
    <variation>N</variation>
    <location>
        <position position="239"/>
    </location>
</feature>
<feature type="sequence variant" description="In haplotype 24.">
    <original>V</original>
    <variation>M</variation>
    <location>
        <position position="377"/>
    </location>
</feature>
<feature type="sequence variant" description="In haplotype 24, haplotype 25 and haplotype 27.">
    <original>N</original>
    <variation>K</variation>
    <location>
        <position position="378"/>
    </location>
</feature>
<proteinExistence type="inferred from homology"/>
<gene>
    <name type="primary">mt:ND5</name>
    <name type="synonym">ND5</name>
</gene>
<sequence>MNYLVNYCKISFYFLMSISLSLFLISLKFLLMDLVYFIEWEILSLQSMSIVMTFLFDWMSLMFMSFVLLISSLVIFYSNQYMEEDYNINRFILLVLMFVMSMMMLIISPNLISILLGWDGLGLVSYCLVIYFQNVKSYNAGMLTALSNRIGDVALLLAIAWMLNYGSWNYIFYLDMMKNNIEMMIIGGLVMLAAMTKSAQIPFSSWLPAAMAAPTPVSALVHSSTLVTAGVYLLIRFNDVLMNWWMAQFLLLVSGLTMFMAGLGANFEFDLKKIIALSTLSQLGLMMSILSMGFYKLAFFHLLTHALFKALLFMCAGSIIHNMKNSQDIRMMGSLSMSMPLTCSCFNVANLALCGMPFLAGFYSKDLILEMVMLSYVNVFSFFLFFFSTGLTVCYSFRLVYYSMTGDFNSSSLHPLNDSGWTMLFSICFLTVMAVIGGSMLSWLMFLNPAMICLPLEMKLLTLFVCIVGGLMGYLISDVKLFFTNKALYFYNFTNFVGSMWFMPVISTLGVINYPLKLGLYSYKSFDQGWSEFFGGQMVYFQLKNYSLYLQEFQSNSLKIYLLSYMLWFIILLMLVVLVN</sequence>
<organism>
    <name type="scientific">Anopheles gambiae</name>
    <name type="common">African malaria mosquito</name>
    <dbReference type="NCBI Taxonomy" id="7165"/>
    <lineage>
        <taxon>Eukaryota</taxon>
        <taxon>Metazoa</taxon>
        <taxon>Ecdysozoa</taxon>
        <taxon>Arthropoda</taxon>
        <taxon>Hexapoda</taxon>
        <taxon>Insecta</taxon>
        <taxon>Pterygota</taxon>
        <taxon>Neoptera</taxon>
        <taxon>Endopterygota</taxon>
        <taxon>Diptera</taxon>
        <taxon>Nematocera</taxon>
        <taxon>Culicoidea</taxon>
        <taxon>Culicidae</taxon>
        <taxon>Anophelinae</taxon>
        <taxon>Anopheles</taxon>
    </lineage>
</organism>